<feature type="chain" id="PRO_0000201127" description="Transcriptional regulator ModE">
    <location>
        <begin position="1"/>
        <end position="255"/>
    </location>
</feature>
<feature type="domain" description="Mop 1" evidence="2">
    <location>
        <begin position="124"/>
        <end position="191"/>
    </location>
</feature>
<feature type="domain" description="Mop 2" evidence="2">
    <location>
        <begin position="194"/>
        <end position="253"/>
    </location>
</feature>
<feature type="DNA-binding region" description="H-T-H motif" evidence="1">
    <location>
        <begin position="34"/>
        <end position="80"/>
    </location>
</feature>
<feature type="region of interest" description="I">
    <location>
        <begin position="1"/>
        <end position="121"/>
    </location>
</feature>
<feature type="region of interest" description="Required for dimer formation and molybdate binding" evidence="1">
    <location>
        <begin position="125"/>
        <end position="133"/>
    </location>
</feature>
<feature type="sequence conflict" description="In Ref. 1; AAA24984." evidence="3" ref="1">
    <original>A</original>
    <variation>V</variation>
    <location>
        <position position="78"/>
    </location>
</feature>
<feature type="sequence conflict" description="In Ref. 1; AAA24984." evidence="3" ref="1">
    <original>A</original>
    <variation>E</variation>
    <location>
        <position position="195"/>
    </location>
</feature>
<feature type="sequence conflict" description="In Ref. 1; AAA24984." evidence="3" ref="1">
    <original>P</original>
    <variation>S</variation>
    <location>
        <position position="198"/>
    </location>
</feature>
<feature type="sequence conflict" description="In Ref. 1; AAA24984." evidence="3" ref="1">
    <original>E</original>
    <variation>G</variation>
    <location>
        <position position="237"/>
    </location>
</feature>
<sequence>MKNTEILLTIKLQQALFIDPKRVRLLKEIQQCGSINQAAKNAKVSYKSAWDHLEAMNKISPRPLLERNTGGKNGGGTALTTYAERLLQLYDLLERTQEHAFHILQDESVPLDSLLTATARFSLQSSARNQFFGRVAQQRIIDSRCVVDVNVQGLPTPLQVSITTKSSARLKLITEKEVMLMFKAPWVKISEQPLANQPNQFPVNIKSLNEEEAILQFAESNIEFCATVHQPNQWQIEQQVWIHIDQEQIILATLG</sequence>
<proteinExistence type="inferred from homology"/>
<reference key="1">
    <citation type="submission" date="1992-06" db="EMBL/GenBank/DDBJ databases">
        <title>Characterization and sequence of the lsg locus from Haemophilus influenzae.</title>
        <authorList>
            <person name="McLaughlin R."/>
            <person name="Abu K.Y."/>
            <person name="Young R."/>
            <person name="Spinola S."/>
            <person name="Apicella M.A."/>
        </authorList>
    </citation>
    <scope>NUCLEOTIDE SEQUENCE [GENOMIC DNA]</scope>
    <source>
        <strain>A2</strain>
    </source>
</reference>
<reference key="2">
    <citation type="journal article" date="1995" name="Science">
        <title>Whole-genome random sequencing and assembly of Haemophilus influenzae Rd.</title>
        <authorList>
            <person name="Fleischmann R.D."/>
            <person name="Adams M.D."/>
            <person name="White O."/>
            <person name="Clayton R.A."/>
            <person name="Kirkness E.F."/>
            <person name="Kerlavage A.R."/>
            <person name="Bult C.J."/>
            <person name="Tomb J.-F."/>
            <person name="Dougherty B.A."/>
            <person name="Merrick J.M."/>
            <person name="McKenney K."/>
            <person name="Sutton G.G."/>
            <person name="FitzHugh W."/>
            <person name="Fields C.A."/>
            <person name="Gocayne J.D."/>
            <person name="Scott J.D."/>
            <person name="Shirley R."/>
            <person name="Liu L.-I."/>
            <person name="Glodek A."/>
            <person name="Kelley J.M."/>
            <person name="Weidman J.F."/>
            <person name="Phillips C.A."/>
            <person name="Spriggs T."/>
            <person name="Hedblom E."/>
            <person name="Cotton M.D."/>
            <person name="Utterback T.R."/>
            <person name="Hanna M.C."/>
            <person name="Nguyen D.T."/>
            <person name="Saudek D.M."/>
            <person name="Brandon R.C."/>
            <person name="Fine L.D."/>
            <person name="Fritchman J.L."/>
            <person name="Fuhrmann J.L."/>
            <person name="Geoghagen N.S.M."/>
            <person name="Gnehm C.L."/>
            <person name="McDonald L.A."/>
            <person name="Small K.V."/>
            <person name="Fraser C.M."/>
            <person name="Smith H.O."/>
            <person name="Venter J.C."/>
        </authorList>
    </citation>
    <scope>NUCLEOTIDE SEQUENCE [LARGE SCALE GENOMIC DNA]</scope>
    <source>
        <strain>ATCC 51907 / DSM 11121 / KW20 / Rd</strain>
    </source>
</reference>
<reference key="3">
    <citation type="journal article" date="1997" name="Arch. Microbiol.">
        <title>Molybdate transport and regulation in bacteria.</title>
        <authorList>
            <person name="Grunden A.M."/>
            <person name="Shanmugam K.T."/>
        </authorList>
    </citation>
    <scope>REVIEW</scope>
</reference>
<dbReference type="EMBL" id="M94855">
    <property type="protein sequence ID" value="AAA24984.1"/>
    <property type="molecule type" value="Genomic_DNA"/>
</dbReference>
<dbReference type="EMBL" id="L42023">
    <property type="protein sequence ID" value="AAC23340.1"/>
    <property type="molecule type" value="Genomic_DNA"/>
</dbReference>
<dbReference type="PIR" id="B64175">
    <property type="entry name" value="B64175"/>
</dbReference>
<dbReference type="RefSeq" id="NP_439836.1">
    <property type="nucleotide sequence ID" value="NC_000907.1"/>
</dbReference>
<dbReference type="SMR" id="P45324"/>
<dbReference type="STRING" id="71421.HI_1694"/>
<dbReference type="EnsemblBacteria" id="AAC23340">
    <property type="protein sequence ID" value="AAC23340"/>
    <property type="gene ID" value="HI_1694"/>
</dbReference>
<dbReference type="KEGG" id="hin:HI_1694"/>
<dbReference type="PATRIC" id="fig|71421.8.peg.1773"/>
<dbReference type="eggNOG" id="COG2005">
    <property type="taxonomic scope" value="Bacteria"/>
</dbReference>
<dbReference type="HOGENOM" id="CLU_087839_0_0_6"/>
<dbReference type="OrthoDB" id="9800709at2"/>
<dbReference type="PhylomeDB" id="P45324"/>
<dbReference type="BioCyc" id="HINF71421:G1GJ1-1710-MONOMER"/>
<dbReference type="Proteomes" id="UP000000579">
    <property type="component" value="Chromosome"/>
</dbReference>
<dbReference type="GO" id="GO:0005737">
    <property type="term" value="C:cytoplasm"/>
    <property type="evidence" value="ECO:0007669"/>
    <property type="project" value="UniProtKB-SubCell"/>
</dbReference>
<dbReference type="GO" id="GO:0000987">
    <property type="term" value="F:cis-regulatory region sequence-specific DNA binding"/>
    <property type="evidence" value="ECO:0000318"/>
    <property type="project" value="GO_Central"/>
</dbReference>
<dbReference type="GO" id="GO:0003700">
    <property type="term" value="F:DNA-binding transcription factor activity"/>
    <property type="evidence" value="ECO:0007669"/>
    <property type="project" value="InterPro"/>
</dbReference>
<dbReference type="GO" id="GO:0030151">
    <property type="term" value="F:molybdenum ion binding"/>
    <property type="evidence" value="ECO:0000318"/>
    <property type="project" value="GO_Central"/>
</dbReference>
<dbReference type="GO" id="GO:0015689">
    <property type="term" value="P:molybdate ion transport"/>
    <property type="evidence" value="ECO:0007669"/>
    <property type="project" value="InterPro"/>
</dbReference>
<dbReference type="GO" id="GO:0006355">
    <property type="term" value="P:regulation of DNA-templated transcription"/>
    <property type="evidence" value="ECO:0000318"/>
    <property type="project" value="GO_Central"/>
</dbReference>
<dbReference type="Gene3D" id="2.40.50.100">
    <property type="match status" value="1"/>
</dbReference>
<dbReference type="Gene3D" id="1.10.10.10">
    <property type="entry name" value="Winged helix-like DNA-binding domain superfamily/Winged helix DNA-binding domain"/>
    <property type="match status" value="1"/>
</dbReference>
<dbReference type="InterPro" id="IPR008995">
    <property type="entry name" value="Mo/tungstate-bd_C_term_dom"/>
</dbReference>
<dbReference type="InterPro" id="IPR016462">
    <property type="entry name" value="ModE"/>
</dbReference>
<dbReference type="InterPro" id="IPR003725">
    <property type="entry name" value="ModE-bd_N"/>
</dbReference>
<dbReference type="InterPro" id="IPR051815">
    <property type="entry name" value="Molybdate_resp_trans_reg"/>
</dbReference>
<dbReference type="InterPro" id="IPR004606">
    <property type="entry name" value="Mop_domain"/>
</dbReference>
<dbReference type="InterPro" id="IPR005116">
    <property type="entry name" value="Transp-assoc_OB_typ1"/>
</dbReference>
<dbReference type="InterPro" id="IPR000847">
    <property type="entry name" value="Tscrpt_reg_HTH_LysR"/>
</dbReference>
<dbReference type="InterPro" id="IPR036388">
    <property type="entry name" value="WH-like_DNA-bd_sf"/>
</dbReference>
<dbReference type="InterPro" id="IPR036390">
    <property type="entry name" value="WH_DNA-bd_sf"/>
</dbReference>
<dbReference type="NCBIfam" id="TIGR00637">
    <property type="entry name" value="ModE_repress"/>
    <property type="match status" value="1"/>
</dbReference>
<dbReference type="NCBIfam" id="TIGR00638">
    <property type="entry name" value="Mop"/>
    <property type="match status" value="1"/>
</dbReference>
<dbReference type="PANTHER" id="PTHR30432:SF1">
    <property type="entry name" value="DNA-BINDING TRANSCRIPTIONAL DUAL REGULATOR MODE"/>
    <property type="match status" value="1"/>
</dbReference>
<dbReference type="PANTHER" id="PTHR30432">
    <property type="entry name" value="TRANSCRIPTIONAL REGULATOR MODE"/>
    <property type="match status" value="1"/>
</dbReference>
<dbReference type="Pfam" id="PF00126">
    <property type="entry name" value="HTH_1"/>
    <property type="match status" value="1"/>
</dbReference>
<dbReference type="Pfam" id="PF03459">
    <property type="entry name" value="TOBE"/>
    <property type="match status" value="1"/>
</dbReference>
<dbReference type="PIRSF" id="PIRSF005763">
    <property type="entry name" value="Txn_reg_ModE"/>
    <property type="match status" value="1"/>
</dbReference>
<dbReference type="SUPFAM" id="SSF50331">
    <property type="entry name" value="MOP-like"/>
    <property type="match status" value="1"/>
</dbReference>
<dbReference type="SUPFAM" id="SSF46785">
    <property type="entry name" value="Winged helix' DNA-binding domain"/>
    <property type="match status" value="1"/>
</dbReference>
<dbReference type="PROSITE" id="PS51866">
    <property type="entry name" value="MOP"/>
    <property type="match status" value="2"/>
</dbReference>
<accession>P45324</accession>
<accession>Q9R7E9</accession>
<name>MODE_HAEIN</name>
<keyword id="KW-0010">Activator</keyword>
<keyword id="KW-0963">Cytoplasm</keyword>
<keyword id="KW-0238">DNA-binding</keyword>
<keyword id="KW-0500">Molybdenum</keyword>
<keyword id="KW-1185">Reference proteome</keyword>
<keyword id="KW-0677">Repeat</keyword>
<keyword id="KW-0678">Repressor</keyword>
<keyword id="KW-0804">Transcription</keyword>
<keyword id="KW-0805">Transcription regulation</keyword>
<keyword id="KW-0813">Transport</keyword>
<protein>
    <recommendedName>
        <fullName>Transcriptional regulator ModE</fullName>
    </recommendedName>
</protein>
<organism>
    <name type="scientific">Haemophilus influenzae (strain ATCC 51907 / DSM 11121 / KW20 / Rd)</name>
    <dbReference type="NCBI Taxonomy" id="71421"/>
    <lineage>
        <taxon>Bacteria</taxon>
        <taxon>Pseudomonadati</taxon>
        <taxon>Pseudomonadota</taxon>
        <taxon>Gammaproteobacteria</taxon>
        <taxon>Pasteurellales</taxon>
        <taxon>Pasteurellaceae</taxon>
        <taxon>Haemophilus</taxon>
    </lineage>
</organism>
<comment type="function">
    <text evidence="1">The ModE-Mo complex acts as a repressor of the modABC operon, involved in the transport of molybdate. Upon binding molybdate, the conformation of the protein changes, promoting dimerization of ModE-Mo. The protein dimer is then competent to bind a DNA region, upstream of the modABC operon. Also acts as an enhancer of the expression of genes coding for molybdoenzymes, both directly and indirectly (By similarity).</text>
</comment>
<comment type="subunit">
    <text evidence="1">Homodimer.</text>
</comment>
<comment type="subcellular location">
    <subcellularLocation>
        <location evidence="3">Cytoplasm</location>
    </subcellularLocation>
</comment>
<comment type="similarity">
    <text evidence="3">Belongs to the ModE family.</text>
</comment>
<gene>
    <name type="primary">modE</name>
    <name type="ordered locus">HI_1694</name>
</gene>
<evidence type="ECO:0000250" key="1"/>
<evidence type="ECO:0000255" key="2">
    <source>
        <dbReference type="PROSITE-ProRule" id="PRU01213"/>
    </source>
</evidence>
<evidence type="ECO:0000305" key="3"/>